<reference key="1">
    <citation type="journal article" date="2008" name="PLoS ONE">
        <title>A recalibrated molecular clock and independent origins for the cholera pandemic clones.</title>
        <authorList>
            <person name="Feng L."/>
            <person name="Reeves P.R."/>
            <person name="Lan R."/>
            <person name="Ren Y."/>
            <person name="Gao C."/>
            <person name="Zhou Z."/>
            <person name="Ren Y."/>
            <person name="Cheng J."/>
            <person name="Wang W."/>
            <person name="Wang J."/>
            <person name="Qian W."/>
            <person name="Li D."/>
            <person name="Wang L."/>
        </authorList>
    </citation>
    <scope>NUCLEOTIDE SEQUENCE [LARGE SCALE GENOMIC DNA]</scope>
    <source>
        <strain>M66-2</strain>
    </source>
</reference>
<protein>
    <recommendedName>
        <fullName evidence="1">Membrane protein insertase YidC</fullName>
    </recommendedName>
    <alternativeName>
        <fullName evidence="1">Foldase YidC</fullName>
    </alternativeName>
    <alternativeName>
        <fullName evidence="1">Membrane integrase YidC</fullName>
    </alternativeName>
    <alternativeName>
        <fullName evidence="1">Membrane protein YidC</fullName>
    </alternativeName>
</protein>
<name>YIDC_VIBCM</name>
<feature type="chain" id="PRO_1000187713" description="Membrane protein insertase YidC">
    <location>
        <begin position="1"/>
        <end position="541"/>
    </location>
</feature>
<feature type="transmembrane region" description="Helical" evidence="1">
    <location>
        <begin position="6"/>
        <end position="26"/>
    </location>
</feature>
<feature type="transmembrane region" description="Helical" evidence="1">
    <location>
        <begin position="343"/>
        <end position="363"/>
    </location>
</feature>
<feature type="transmembrane region" description="Helical" evidence="1">
    <location>
        <begin position="418"/>
        <end position="438"/>
    </location>
</feature>
<feature type="transmembrane region" description="Helical" evidence="1">
    <location>
        <begin position="456"/>
        <end position="476"/>
    </location>
</feature>
<feature type="transmembrane region" description="Helical" evidence="1">
    <location>
        <begin position="497"/>
        <end position="517"/>
    </location>
</feature>
<feature type="region of interest" description="Disordered" evidence="2">
    <location>
        <begin position="31"/>
        <end position="55"/>
    </location>
</feature>
<feature type="compositionally biased region" description="Low complexity" evidence="2">
    <location>
        <begin position="31"/>
        <end position="47"/>
    </location>
</feature>
<evidence type="ECO:0000255" key="1">
    <source>
        <dbReference type="HAMAP-Rule" id="MF_01810"/>
    </source>
</evidence>
<evidence type="ECO:0000256" key="2">
    <source>
        <dbReference type="SAM" id="MobiDB-lite"/>
    </source>
</evidence>
<dbReference type="EMBL" id="CP001233">
    <property type="protein sequence ID" value="ACP04341.1"/>
    <property type="molecule type" value="Genomic_DNA"/>
</dbReference>
<dbReference type="RefSeq" id="WP_000378235.1">
    <property type="nucleotide sequence ID" value="NC_012578.1"/>
</dbReference>
<dbReference type="SMR" id="C3LP77"/>
<dbReference type="KEGG" id="vcm:VCM66_0004"/>
<dbReference type="HOGENOM" id="CLU_016535_3_0_6"/>
<dbReference type="Proteomes" id="UP000001217">
    <property type="component" value="Chromosome I"/>
</dbReference>
<dbReference type="GO" id="GO:0005886">
    <property type="term" value="C:plasma membrane"/>
    <property type="evidence" value="ECO:0007669"/>
    <property type="project" value="UniProtKB-SubCell"/>
</dbReference>
<dbReference type="GO" id="GO:0032977">
    <property type="term" value="F:membrane insertase activity"/>
    <property type="evidence" value="ECO:0007669"/>
    <property type="project" value="InterPro"/>
</dbReference>
<dbReference type="GO" id="GO:0051205">
    <property type="term" value="P:protein insertion into membrane"/>
    <property type="evidence" value="ECO:0007669"/>
    <property type="project" value="TreeGrafter"/>
</dbReference>
<dbReference type="GO" id="GO:0015031">
    <property type="term" value="P:protein transport"/>
    <property type="evidence" value="ECO:0007669"/>
    <property type="project" value="UniProtKB-KW"/>
</dbReference>
<dbReference type="CDD" id="cd20070">
    <property type="entry name" value="5TM_YidC_Alb3"/>
    <property type="match status" value="1"/>
</dbReference>
<dbReference type="CDD" id="cd19961">
    <property type="entry name" value="EcYidC-like_peri"/>
    <property type="match status" value="1"/>
</dbReference>
<dbReference type="FunFam" id="2.70.98.90:FF:000001">
    <property type="entry name" value="Membrane protein insertase YidC"/>
    <property type="match status" value="1"/>
</dbReference>
<dbReference type="Gene3D" id="2.70.98.90">
    <property type="match status" value="1"/>
</dbReference>
<dbReference type="HAMAP" id="MF_01810">
    <property type="entry name" value="YidC_type1"/>
    <property type="match status" value="1"/>
</dbReference>
<dbReference type="InterPro" id="IPR019998">
    <property type="entry name" value="Membr_insert_YidC"/>
</dbReference>
<dbReference type="InterPro" id="IPR028053">
    <property type="entry name" value="Membr_insert_YidC_N"/>
</dbReference>
<dbReference type="InterPro" id="IPR001708">
    <property type="entry name" value="YidC/ALB3/OXA1/COX18"/>
</dbReference>
<dbReference type="InterPro" id="IPR028055">
    <property type="entry name" value="YidC/Oxa/ALB_C"/>
</dbReference>
<dbReference type="InterPro" id="IPR047196">
    <property type="entry name" value="YidC_ALB_C"/>
</dbReference>
<dbReference type="InterPro" id="IPR038221">
    <property type="entry name" value="YidC_periplasmic_sf"/>
</dbReference>
<dbReference type="NCBIfam" id="NF002351">
    <property type="entry name" value="PRK01318.1-1"/>
    <property type="match status" value="1"/>
</dbReference>
<dbReference type="NCBIfam" id="NF002352">
    <property type="entry name" value="PRK01318.1-3"/>
    <property type="match status" value="1"/>
</dbReference>
<dbReference type="NCBIfam" id="TIGR03593">
    <property type="entry name" value="yidC_nterm"/>
    <property type="match status" value="1"/>
</dbReference>
<dbReference type="NCBIfam" id="TIGR03592">
    <property type="entry name" value="yidC_oxa1_cterm"/>
    <property type="match status" value="1"/>
</dbReference>
<dbReference type="PANTHER" id="PTHR12428:SF65">
    <property type="entry name" value="CYTOCHROME C OXIDASE ASSEMBLY PROTEIN COX18, MITOCHONDRIAL"/>
    <property type="match status" value="1"/>
</dbReference>
<dbReference type="PANTHER" id="PTHR12428">
    <property type="entry name" value="OXA1"/>
    <property type="match status" value="1"/>
</dbReference>
<dbReference type="Pfam" id="PF02096">
    <property type="entry name" value="60KD_IMP"/>
    <property type="match status" value="1"/>
</dbReference>
<dbReference type="Pfam" id="PF14849">
    <property type="entry name" value="YidC_periplas"/>
    <property type="match status" value="1"/>
</dbReference>
<dbReference type="PRINTS" id="PR00701">
    <property type="entry name" value="60KDINNERMP"/>
</dbReference>
<dbReference type="PRINTS" id="PR01900">
    <property type="entry name" value="YIDCPROTEIN"/>
</dbReference>
<comment type="function">
    <text evidence="1">Required for the insertion and/or proper folding and/or complex formation of integral membrane proteins into the membrane. Involved in integration of membrane proteins that insert both dependently and independently of the Sec translocase complex, as well as at least some lipoproteins. Aids folding of multispanning membrane proteins.</text>
</comment>
<comment type="subunit">
    <text evidence="1">Interacts with the Sec translocase complex via SecD. Specifically interacts with transmembrane segments of nascent integral membrane proteins during membrane integration.</text>
</comment>
<comment type="subcellular location">
    <subcellularLocation>
        <location evidence="1">Cell inner membrane</location>
        <topology evidence="1">Multi-pass membrane protein</topology>
    </subcellularLocation>
</comment>
<comment type="similarity">
    <text evidence="1">Belongs to the OXA1/ALB3/YidC family. Type 1 subfamily.</text>
</comment>
<accession>C3LP77</accession>
<sequence length="541" mass="60621">MDSQRNILLIALALVSFLLFQQWQVAKNPAPQATQQAQSTGAAPAPSFSDELDPTPAQNVAAKAKTITVSTDVLTLSIDTLGGDVVSAKLNQYSEELNSPESFVLLQNTQGHQFIAQSGLVGPQGIDVTSNNRPAYQVSADSFTLAEGQDELRIPMTYQANGIDYTKTFILKRGSYAVDVVFDVANNSGSEATLGMYAHLRQNLLDSGGNLAMPTYRGGAYSTSDVRYKKYSFDDMKDRNLSAPNDVTVNWVAMIQHYFASAWIPRDEPQAQLYSRVINNLGDMGIRTPNKTIANGDKAEFEATLWVGPKLQDQMAATAPNLDLVVDYGWLWFIAKPLHWLLSVIQTFVGNWGVAIICLTFIVRGAMYPLTKAQYTSMAKMRMLQPKLQAMRERIGDDRQRMSQEMMELYKKEKVNPLGGCLPILLQMPIFIALYWALMESVELRHSPFFGWIHDLSAQDPYYILPLLMGASMFVIQKMSPTTITDPMQQKIMTFMPVMFTFFFLWFPSGLVLYWLVSNIVTLIQQTLIYKALEKKGLHSK</sequence>
<keyword id="KW-0997">Cell inner membrane</keyword>
<keyword id="KW-1003">Cell membrane</keyword>
<keyword id="KW-0143">Chaperone</keyword>
<keyword id="KW-0472">Membrane</keyword>
<keyword id="KW-0653">Protein transport</keyword>
<keyword id="KW-0812">Transmembrane</keyword>
<keyword id="KW-1133">Transmembrane helix</keyword>
<keyword id="KW-0813">Transport</keyword>
<organism>
    <name type="scientific">Vibrio cholerae serotype O1 (strain M66-2)</name>
    <dbReference type="NCBI Taxonomy" id="579112"/>
    <lineage>
        <taxon>Bacteria</taxon>
        <taxon>Pseudomonadati</taxon>
        <taxon>Pseudomonadota</taxon>
        <taxon>Gammaproteobacteria</taxon>
        <taxon>Vibrionales</taxon>
        <taxon>Vibrionaceae</taxon>
        <taxon>Vibrio</taxon>
    </lineage>
</organism>
<gene>
    <name evidence="1" type="primary">yidC</name>
    <name type="ordered locus">VCM66_0004</name>
</gene>
<proteinExistence type="inferred from homology"/>